<proteinExistence type="inferred from homology"/>
<evidence type="ECO:0000255" key="1">
    <source>
        <dbReference type="HAMAP-Rule" id="MF_00228"/>
    </source>
</evidence>
<name>THIM_STAAM</name>
<feature type="chain" id="PRO_0000156953" description="Hydroxyethylthiazole kinase">
    <location>
        <begin position="1"/>
        <end position="263"/>
    </location>
</feature>
<feature type="binding site" evidence="1">
    <location>
        <position position="39"/>
    </location>
    <ligand>
        <name>substrate</name>
    </ligand>
</feature>
<feature type="binding site" evidence="1">
    <location>
        <position position="115"/>
    </location>
    <ligand>
        <name>ATP</name>
        <dbReference type="ChEBI" id="CHEBI:30616"/>
    </ligand>
</feature>
<feature type="binding site" evidence="1">
    <location>
        <position position="160"/>
    </location>
    <ligand>
        <name>ATP</name>
        <dbReference type="ChEBI" id="CHEBI:30616"/>
    </ligand>
</feature>
<feature type="binding site" evidence="1">
    <location>
        <position position="187"/>
    </location>
    <ligand>
        <name>substrate</name>
    </ligand>
</feature>
<sequence>MNYLNKIRIENPLTICYTNDVVKNFTANGLLSIGASPAMSEAPEEAEEFYKVAQALLINIGTLTAQNEQDIIAIAQTANEAGLPIVFDPVAVGASTYRKQFCKLLLKSAKVSVIKGNASEILALIDDTATMKGTDSDANLDAVAIAKKAYAIYKTAIVITGKEDVIVQDNKAIVLANGSPLLARVTGAGCLLGGVIAGFLFRETEPDIEALIEAVSVFNIAAEVAAENENCGGPGTFSPLLLDTLYHLNETTYQQRIRIQEVE</sequence>
<protein>
    <recommendedName>
        <fullName evidence="1">Hydroxyethylthiazole kinase</fullName>
        <ecNumber evidence="1">2.7.1.50</ecNumber>
    </recommendedName>
    <alternativeName>
        <fullName evidence="1">4-methyl-5-beta-hydroxyethylthiazole kinase</fullName>
        <shortName evidence="1">TH kinase</shortName>
        <shortName evidence="1">Thz kinase</shortName>
    </alternativeName>
</protein>
<keyword id="KW-0067">ATP-binding</keyword>
<keyword id="KW-0418">Kinase</keyword>
<keyword id="KW-0460">Magnesium</keyword>
<keyword id="KW-0479">Metal-binding</keyword>
<keyword id="KW-0547">Nucleotide-binding</keyword>
<keyword id="KW-0784">Thiamine biosynthesis</keyword>
<keyword id="KW-0808">Transferase</keyword>
<dbReference type="EC" id="2.7.1.50" evidence="1"/>
<dbReference type="EMBL" id="BA000017">
    <property type="protein sequence ID" value="BAB58254.1"/>
    <property type="molecule type" value="Genomic_DNA"/>
</dbReference>
<dbReference type="RefSeq" id="WP_001108483.1">
    <property type="nucleotide sequence ID" value="NC_002758.2"/>
</dbReference>
<dbReference type="SMR" id="P66922"/>
<dbReference type="KEGG" id="sav:SAV2092"/>
<dbReference type="HOGENOM" id="CLU_019943_0_2_9"/>
<dbReference type="PhylomeDB" id="P66922"/>
<dbReference type="UniPathway" id="UPA00060">
    <property type="reaction ID" value="UER00139"/>
</dbReference>
<dbReference type="Proteomes" id="UP000002481">
    <property type="component" value="Chromosome"/>
</dbReference>
<dbReference type="GO" id="GO:0005524">
    <property type="term" value="F:ATP binding"/>
    <property type="evidence" value="ECO:0007669"/>
    <property type="project" value="UniProtKB-UniRule"/>
</dbReference>
<dbReference type="GO" id="GO:0004417">
    <property type="term" value="F:hydroxyethylthiazole kinase activity"/>
    <property type="evidence" value="ECO:0007669"/>
    <property type="project" value="UniProtKB-UniRule"/>
</dbReference>
<dbReference type="GO" id="GO:0000287">
    <property type="term" value="F:magnesium ion binding"/>
    <property type="evidence" value="ECO:0007669"/>
    <property type="project" value="UniProtKB-UniRule"/>
</dbReference>
<dbReference type="GO" id="GO:0009228">
    <property type="term" value="P:thiamine biosynthetic process"/>
    <property type="evidence" value="ECO:0007669"/>
    <property type="project" value="UniProtKB-KW"/>
</dbReference>
<dbReference type="GO" id="GO:0009229">
    <property type="term" value="P:thiamine diphosphate biosynthetic process"/>
    <property type="evidence" value="ECO:0007669"/>
    <property type="project" value="UniProtKB-UniRule"/>
</dbReference>
<dbReference type="CDD" id="cd01170">
    <property type="entry name" value="THZ_kinase"/>
    <property type="match status" value="1"/>
</dbReference>
<dbReference type="Gene3D" id="3.40.1190.20">
    <property type="match status" value="1"/>
</dbReference>
<dbReference type="HAMAP" id="MF_00228">
    <property type="entry name" value="Thz_kinase"/>
    <property type="match status" value="1"/>
</dbReference>
<dbReference type="InterPro" id="IPR000417">
    <property type="entry name" value="Hyethyz_kinase"/>
</dbReference>
<dbReference type="InterPro" id="IPR029056">
    <property type="entry name" value="Ribokinase-like"/>
</dbReference>
<dbReference type="NCBIfam" id="NF006830">
    <property type="entry name" value="PRK09355.1"/>
    <property type="match status" value="1"/>
</dbReference>
<dbReference type="Pfam" id="PF02110">
    <property type="entry name" value="HK"/>
    <property type="match status" value="1"/>
</dbReference>
<dbReference type="PIRSF" id="PIRSF000513">
    <property type="entry name" value="Thz_kinase"/>
    <property type="match status" value="1"/>
</dbReference>
<dbReference type="PRINTS" id="PR01099">
    <property type="entry name" value="HYETHTZKNASE"/>
</dbReference>
<dbReference type="SUPFAM" id="SSF53613">
    <property type="entry name" value="Ribokinase-like"/>
    <property type="match status" value="1"/>
</dbReference>
<comment type="function">
    <text evidence="1">Catalyzes the phosphorylation of the hydroxyl group of 4-methyl-5-beta-hydroxyethylthiazole (THZ).</text>
</comment>
<comment type="catalytic activity">
    <reaction evidence="1">
        <text>5-(2-hydroxyethyl)-4-methylthiazole + ATP = 4-methyl-5-(2-phosphooxyethyl)-thiazole + ADP + H(+)</text>
        <dbReference type="Rhea" id="RHEA:24212"/>
        <dbReference type="ChEBI" id="CHEBI:15378"/>
        <dbReference type="ChEBI" id="CHEBI:17957"/>
        <dbReference type="ChEBI" id="CHEBI:30616"/>
        <dbReference type="ChEBI" id="CHEBI:58296"/>
        <dbReference type="ChEBI" id="CHEBI:456216"/>
        <dbReference type="EC" id="2.7.1.50"/>
    </reaction>
</comment>
<comment type="cofactor">
    <cofactor evidence="1">
        <name>Mg(2+)</name>
        <dbReference type="ChEBI" id="CHEBI:18420"/>
    </cofactor>
</comment>
<comment type="pathway">
    <text evidence="1">Cofactor biosynthesis; thiamine diphosphate biosynthesis; 4-methyl-5-(2-phosphoethyl)-thiazole from 5-(2-hydroxyethyl)-4-methylthiazole: step 1/1.</text>
</comment>
<comment type="similarity">
    <text evidence="1">Belongs to the Thz kinase family.</text>
</comment>
<organism>
    <name type="scientific">Staphylococcus aureus (strain Mu50 / ATCC 700699)</name>
    <dbReference type="NCBI Taxonomy" id="158878"/>
    <lineage>
        <taxon>Bacteria</taxon>
        <taxon>Bacillati</taxon>
        <taxon>Bacillota</taxon>
        <taxon>Bacilli</taxon>
        <taxon>Bacillales</taxon>
        <taxon>Staphylococcaceae</taxon>
        <taxon>Staphylococcus</taxon>
    </lineage>
</organism>
<reference key="1">
    <citation type="journal article" date="2001" name="Lancet">
        <title>Whole genome sequencing of meticillin-resistant Staphylococcus aureus.</title>
        <authorList>
            <person name="Kuroda M."/>
            <person name="Ohta T."/>
            <person name="Uchiyama I."/>
            <person name="Baba T."/>
            <person name="Yuzawa H."/>
            <person name="Kobayashi I."/>
            <person name="Cui L."/>
            <person name="Oguchi A."/>
            <person name="Aoki K."/>
            <person name="Nagai Y."/>
            <person name="Lian J.-Q."/>
            <person name="Ito T."/>
            <person name="Kanamori M."/>
            <person name="Matsumaru H."/>
            <person name="Maruyama A."/>
            <person name="Murakami H."/>
            <person name="Hosoyama A."/>
            <person name="Mizutani-Ui Y."/>
            <person name="Takahashi N.K."/>
            <person name="Sawano T."/>
            <person name="Inoue R."/>
            <person name="Kaito C."/>
            <person name="Sekimizu K."/>
            <person name="Hirakawa H."/>
            <person name="Kuhara S."/>
            <person name="Goto S."/>
            <person name="Yabuzaki J."/>
            <person name="Kanehisa M."/>
            <person name="Yamashita A."/>
            <person name="Oshima K."/>
            <person name="Furuya K."/>
            <person name="Yoshino C."/>
            <person name="Shiba T."/>
            <person name="Hattori M."/>
            <person name="Ogasawara N."/>
            <person name="Hayashi H."/>
            <person name="Hiramatsu K."/>
        </authorList>
    </citation>
    <scope>NUCLEOTIDE SEQUENCE [LARGE SCALE GENOMIC DNA]</scope>
    <source>
        <strain>Mu50 / ATCC 700699</strain>
    </source>
</reference>
<gene>
    <name evidence="1" type="primary">thiM</name>
    <name type="ordered locus">SAV2092</name>
</gene>
<accession>P66922</accession>
<accession>Q99SG5</accession>